<proteinExistence type="inferred from homology"/>
<geneLocation type="chloroplast"/>
<keyword id="KW-0050">Antiport</keyword>
<keyword id="KW-0150">Chloroplast</keyword>
<keyword id="KW-0375">Hydrogen ion transport</keyword>
<keyword id="KW-0406">Ion transport</keyword>
<keyword id="KW-0472">Membrane</keyword>
<keyword id="KW-0934">Plastid</keyword>
<keyword id="KW-1001">Plastid inner membrane</keyword>
<keyword id="KW-0630">Potassium</keyword>
<keyword id="KW-0633">Potassium transport</keyword>
<keyword id="KW-1185">Reference proteome</keyword>
<keyword id="KW-0812">Transmembrane</keyword>
<keyword id="KW-1133">Transmembrane helix</keyword>
<keyword id="KW-0813">Transport</keyword>
<protein>
    <recommendedName>
        <fullName evidence="1">Potassium/proton antiporter CemA</fullName>
    </recommendedName>
    <alternativeName>
        <fullName evidence="1">Chloroplast envelope membrane protein A</fullName>
        <shortName evidence="1">CemA</shortName>
    </alternativeName>
</protein>
<reference key="1">
    <citation type="journal article" date="2007" name="Plant Biotechnol. J.">
        <title>The complete nucleotide sequence of the coffee (Coffea arabica L.) chloroplast genome: organization and implications for biotechnology and phylogenetic relationships amongst angiosperms.</title>
        <authorList>
            <person name="Samson N."/>
            <person name="Bausher M.G."/>
            <person name="Lee S.-B."/>
            <person name="Jansen R.K."/>
            <person name="Daniell H."/>
        </authorList>
    </citation>
    <scope>NUCLEOTIDE SEQUENCE [LARGE SCALE GENOMIC DNA]</scope>
</reference>
<sequence>MTKKKAFTPLLYLVSIVFLPWWLSLSFNKSLESWVNNWWNAGQSEIFLNDIQEKSILEKFIELEELLVLDELIEEYSETHLQKFRIGIQKEAIQLINIYNEGRIHTILHFSTNIICFVILSGFSILGNEELVILNSWTQKFLYNLSDTVKAFSILLLTDLCIGFHSPHGWELMVGSVYKDLGFVHNDQIISGLVSTFPVILDTIFKYWIFRYLNRVSPSLVVIYHSMND</sequence>
<feature type="chain" id="PRO_0000275233" description="Potassium/proton antiporter CemA">
    <location>
        <begin position="1"/>
        <end position="229"/>
    </location>
</feature>
<feature type="transmembrane region" description="Helical" evidence="1">
    <location>
        <begin position="7"/>
        <end position="27"/>
    </location>
</feature>
<feature type="transmembrane region" description="Helical" evidence="1">
    <location>
        <begin position="114"/>
        <end position="134"/>
    </location>
</feature>
<feature type="transmembrane region" description="Helical" evidence="1">
    <location>
        <begin position="154"/>
        <end position="174"/>
    </location>
</feature>
<feature type="transmembrane region" description="Helical" evidence="1">
    <location>
        <begin position="189"/>
        <end position="209"/>
    </location>
</feature>
<gene>
    <name evidence="1" type="primary">cemA</name>
</gene>
<comment type="function">
    <text evidence="1">Contributes to K(+)/H(+) antiport activity by supporting proton efflux to control proton extrusion and homeostasis in chloroplasts in a light-dependent manner to modulate photosynthesis. Prevents excessive induction of non-photochemical quenching (NPQ) under continuous-light conditions. Indirectly promotes efficient inorganic carbon uptake into chloroplasts.</text>
</comment>
<comment type="catalytic activity">
    <reaction evidence="1">
        <text>K(+)(in) + H(+)(out) = K(+)(out) + H(+)(in)</text>
        <dbReference type="Rhea" id="RHEA:29467"/>
        <dbReference type="ChEBI" id="CHEBI:15378"/>
        <dbReference type="ChEBI" id="CHEBI:29103"/>
    </reaction>
</comment>
<comment type="subcellular location">
    <subcellularLocation>
        <location evidence="1">Plastid</location>
        <location evidence="1">Chloroplast inner membrane</location>
        <topology evidence="1">Multi-pass membrane protein</topology>
    </subcellularLocation>
</comment>
<comment type="similarity">
    <text evidence="1 2">Belongs to the CemA family.</text>
</comment>
<accession>A0A347</accession>
<evidence type="ECO:0000255" key="1">
    <source>
        <dbReference type="HAMAP-Rule" id="MF_01308"/>
    </source>
</evidence>
<evidence type="ECO:0000305" key="2"/>
<dbReference type="EMBL" id="EF044213">
    <property type="protein sequence ID" value="ABJ89691.1"/>
    <property type="molecule type" value="Genomic_DNA"/>
</dbReference>
<dbReference type="RefSeq" id="YP_817494.1">
    <property type="nucleotide sequence ID" value="NC_008535.1"/>
</dbReference>
<dbReference type="GeneID" id="4421775"/>
<dbReference type="OrthoDB" id="993at2759"/>
<dbReference type="Proteomes" id="UP000515148">
    <property type="component" value="Chloroplast Pltd"/>
</dbReference>
<dbReference type="GO" id="GO:0009706">
    <property type="term" value="C:chloroplast inner membrane"/>
    <property type="evidence" value="ECO:0007669"/>
    <property type="project" value="UniProtKB-SubCell"/>
</dbReference>
<dbReference type="GO" id="GO:0015297">
    <property type="term" value="F:antiporter activity"/>
    <property type="evidence" value="ECO:0007669"/>
    <property type="project" value="UniProtKB-KW"/>
</dbReference>
<dbReference type="GO" id="GO:0015078">
    <property type="term" value="F:proton transmembrane transporter activity"/>
    <property type="evidence" value="ECO:0007669"/>
    <property type="project" value="UniProtKB-UniRule"/>
</dbReference>
<dbReference type="GO" id="GO:0006813">
    <property type="term" value="P:potassium ion transport"/>
    <property type="evidence" value="ECO:0007669"/>
    <property type="project" value="UniProtKB-UniRule"/>
</dbReference>
<dbReference type="HAMAP" id="MF_01308">
    <property type="entry name" value="CemA_PxcA"/>
    <property type="match status" value="1"/>
</dbReference>
<dbReference type="InterPro" id="IPR004282">
    <property type="entry name" value="CemA"/>
</dbReference>
<dbReference type="PANTHER" id="PTHR33650:SF2">
    <property type="entry name" value="CHLOROPLAST ENVELOPE MEMBRANE PROTEIN"/>
    <property type="match status" value="1"/>
</dbReference>
<dbReference type="PANTHER" id="PTHR33650">
    <property type="entry name" value="CHLOROPLAST ENVELOPE MEMBRANE PROTEIN-RELATED"/>
    <property type="match status" value="1"/>
</dbReference>
<dbReference type="Pfam" id="PF03040">
    <property type="entry name" value="CemA"/>
    <property type="match status" value="1"/>
</dbReference>
<name>CEMA_COFAR</name>
<organism>
    <name type="scientific">Coffea arabica</name>
    <name type="common">Arabian coffee</name>
    <dbReference type="NCBI Taxonomy" id="13443"/>
    <lineage>
        <taxon>Eukaryota</taxon>
        <taxon>Viridiplantae</taxon>
        <taxon>Streptophyta</taxon>
        <taxon>Embryophyta</taxon>
        <taxon>Tracheophyta</taxon>
        <taxon>Spermatophyta</taxon>
        <taxon>Magnoliopsida</taxon>
        <taxon>eudicotyledons</taxon>
        <taxon>Gunneridae</taxon>
        <taxon>Pentapetalae</taxon>
        <taxon>asterids</taxon>
        <taxon>lamiids</taxon>
        <taxon>Gentianales</taxon>
        <taxon>Rubiaceae</taxon>
        <taxon>Ixoroideae</taxon>
        <taxon>Gardenieae complex</taxon>
        <taxon>Bertiereae - Coffeeae clade</taxon>
        <taxon>Coffeeae</taxon>
        <taxon>Coffea</taxon>
    </lineage>
</organism>